<gene>
    <name evidence="1" type="primary">hisA</name>
    <name type="ordered locus">GTNG_3022</name>
</gene>
<evidence type="ECO:0000255" key="1">
    <source>
        <dbReference type="HAMAP-Rule" id="MF_01014"/>
    </source>
</evidence>
<reference key="1">
    <citation type="journal article" date="2007" name="Proc. Natl. Acad. Sci. U.S.A.">
        <title>Genome and proteome of long-chain alkane degrading Geobacillus thermodenitrificans NG80-2 isolated from a deep-subsurface oil reservoir.</title>
        <authorList>
            <person name="Feng L."/>
            <person name="Wang W."/>
            <person name="Cheng J."/>
            <person name="Ren Y."/>
            <person name="Zhao G."/>
            <person name="Gao C."/>
            <person name="Tang Y."/>
            <person name="Liu X."/>
            <person name="Han W."/>
            <person name="Peng X."/>
            <person name="Liu R."/>
            <person name="Wang L."/>
        </authorList>
    </citation>
    <scope>NUCLEOTIDE SEQUENCE [LARGE SCALE GENOMIC DNA]</scope>
    <source>
        <strain>NG80-2</strain>
    </source>
</reference>
<organism>
    <name type="scientific">Geobacillus thermodenitrificans (strain NG80-2)</name>
    <dbReference type="NCBI Taxonomy" id="420246"/>
    <lineage>
        <taxon>Bacteria</taxon>
        <taxon>Bacillati</taxon>
        <taxon>Bacillota</taxon>
        <taxon>Bacilli</taxon>
        <taxon>Bacillales</taxon>
        <taxon>Anoxybacillaceae</taxon>
        <taxon>Geobacillus</taxon>
    </lineage>
</organism>
<comment type="catalytic activity">
    <reaction evidence="1">
        <text>1-(5-phospho-beta-D-ribosyl)-5-[(5-phospho-beta-D-ribosylamino)methylideneamino]imidazole-4-carboxamide = 5-[(5-phospho-1-deoxy-D-ribulos-1-ylimino)methylamino]-1-(5-phospho-beta-D-ribosyl)imidazole-4-carboxamide</text>
        <dbReference type="Rhea" id="RHEA:15469"/>
        <dbReference type="ChEBI" id="CHEBI:58435"/>
        <dbReference type="ChEBI" id="CHEBI:58525"/>
        <dbReference type="EC" id="5.3.1.16"/>
    </reaction>
</comment>
<comment type="pathway">
    <text evidence="1">Amino-acid biosynthesis; L-histidine biosynthesis; L-histidine from 5-phospho-alpha-D-ribose 1-diphosphate: step 4/9.</text>
</comment>
<comment type="subcellular location">
    <subcellularLocation>
        <location evidence="1">Cytoplasm</location>
    </subcellularLocation>
</comment>
<comment type="similarity">
    <text evidence="1">Belongs to the HisA/HisF family.</text>
</comment>
<feature type="chain" id="PRO_1000063209" description="1-(5-phosphoribosyl)-5-[(5-phosphoribosylamino)methylideneamino] imidazole-4-carboxamide isomerase">
    <location>
        <begin position="1"/>
        <end position="245"/>
    </location>
</feature>
<feature type="active site" description="Proton acceptor" evidence="1">
    <location>
        <position position="11"/>
    </location>
</feature>
<feature type="active site" description="Proton donor" evidence="1">
    <location>
        <position position="132"/>
    </location>
</feature>
<accession>A4ISR3</accession>
<proteinExistence type="inferred from homology"/>
<protein>
    <recommendedName>
        <fullName evidence="1">1-(5-phosphoribosyl)-5-[(5-phosphoribosylamino)methylideneamino] imidazole-4-carboxamide isomerase</fullName>
        <ecNumber evidence="1">5.3.1.16</ecNumber>
    </recommendedName>
    <alternativeName>
        <fullName evidence="1">Phosphoribosylformimino-5-aminoimidazole carboxamide ribotide isomerase</fullName>
    </alternativeName>
</protein>
<name>HIS4_GEOTN</name>
<dbReference type="EC" id="5.3.1.16" evidence="1"/>
<dbReference type="EMBL" id="CP000557">
    <property type="protein sequence ID" value="ABO68367.1"/>
    <property type="molecule type" value="Genomic_DNA"/>
</dbReference>
<dbReference type="RefSeq" id="WP_008880306.1">
    <property type="nucleotide sequence ID" value="NC_009328.1"/>
</dbReference>
<dbReference type="SMR" id="A4ISR3"/>
<dbReference type="GeneID" id="87622829"/>
<dbReference type="KEGG" id="gtn:GTNG_3022"/>
<dbReference type="eggNOG" id="COG0106">
    <property type="taxonomic scope" value="Bacteria"/>
</dbReference>
<dbReference type="HOGENOM" id="CLU_048577_1_1_9"/>
<dbReference type="UniPathway" id="UPA00031">
    <property type="reaction ID" value="UER00009"/>
</dbReference>
<dbReference type="Proteomes" id="UP000001578">
    <property type="component" value="Chromosome"/>
</dbReference>
<dbReference type="GO" id="GO:0005737">
    <property type="term" value="C:cytoplasm"/>
    <property type="evidence" value="ECO:0007669"/>
    <property type="project" value="UniProtKB-SubCell"/>
</dbReference>
<dbReference type="GO" id="GO:0003949">
    <property type="term" value="F:1-(5-phosphoribosyl)-5-[(5-phosphoribosylamino)methylideneamino]imidazole-4-carboxamide isomerase activity"/>
    <property type="evidence" value="ECO:0007669"/>
    <property type="project" value="UniProtKB-UniRule"/>
</dbReference>
<dbReference type="GO" id="GO:0000105">
    <property type="term" value="P:L-histidine biosynthetic process"/>
    <property type="evidence" value="ECO:0007669"/>
    <property type="project" value="UniProtKB-UniRule"/>
</dbReference>
<dbReference type="GO" id="GO:0000162">
    <property type="term" value="P:L-tryptophan biosynthetic process"/>
    <property type="evidence" value="ECO:0007669"/>
    <property type="project" value="TreeGrafter"/>
</dbReference>
<dbReference type="CDD" id="cd04732">
    <property type="entry name" value="HisA"/>
    <property type="match status" value="1"/>
</dbReference>
<dbReference type="FunFam" id="3.20.20.70:FF:000009">
    <property type="entry name" value="1-(5-phosphoribosyl)-5-[(5-phosphoribosylamino)methylideneamino] imidazole-4-carboxamide isomerase"/>
    <property type="match status" value="1"/>
</dbReference>
<dbReference type="Gene3D" id="3.20.20.70">
    <property type="entry name" value="Aldolase class I"/>
    <property type="match status" value="1"/>
</dbReference>
<dbReference type="HAMAP" id="MF_01014">
    <property type="entry name" value="HisA"/>
    <property type="match status" value="1"/>
</dbReference>
<dbReference type="InterPro" id="IPR013785">
    <property type="entry name" value="Aldolase_TIM"/>
</dbReference>
<dbReference type="InterPro" id="IPR006062">
    <property type="entry name" value="His_biosynth"/>
</dbReference>
<dbReference type="InterPro" id="IPR006063">
    <property type="entry name" value="HisA_bact_arch"/>
</dbReference>
<dbReference type="InterPro" id="IPR044524">
    <property type="entry name" value="Isoase_HisA-like"/>
</dbReference>
<dbReference type="InterPro" id="IPR023016">
    <property type="entry name" value="Isoase_HisA-like_bact"/>
</dbReference>
<dbReference type="InterPro" id="IPR011060">
    <property type="entry name" value="RibuloseP-bd_barrel"/>
</dbReference>
<dbReference type="NCBIfam" id="TIGR00007">
    <property type="entry name" value="1-(5-phosphoribosyl)-5-[(5-phosphoribosylamino)methylideneamino]imidazole-4-carboxamide isomerase"/>
    <property type="match status" value="1"/>
</dbReference>
<dbReference type="PANTHER" id="PTHR43090">
    <property type="entry name" value="1-(5-PHOSPHORIBOSYL)-5-[(5-PHOSPHORIBOSYLAMINO)METHYLIDENEAMINO] IMIDAZOLE-4-CARBOXAMIDE ISOMERASE"/>
    <property type="match status" value="1"/>
</dbReference>
<dbReference type="PANTHER" id="PTHR43090:SF2">
    <property type="entry name" value="1-(5-PHOSPHORIBOSYL)-5-[(5-PHOSPHORIBOSYLAMINO)METHYLIDENEAMINO] IMIDAZOLE-4-CARBOXAMIDE ISOMERASE"/>
    <property type="match status" value="1"/>
</dbReference>
<dbReference type="Pfam" id="PF00977">
    <property type="entry name" value="His_biosynth"/>
    <property type="match status" value="1"/>
</dbReference>
<dbReference type="SUPFAM" id="SSF51366">
    <property type="entry name" value="Ribulose-phoshate binding barrel"/>
    <property type="match status" value="1"/>
</dbReference>
<keyword id="KW-0028">Amino-acid biosynthesis</keyword>
<keyword id="KW-0963">Cytoplasm</keyword>
<keyword id="KW-0368">Histidine biosynthesis</keyword>
<keyword id="KW-0413">Isomerase</keyword>
<sequence>MASFTIYPAIDMRGGKCVRLLQGDYNKETVYGDSPVAMAEQFAAQGAEWIHMVDLDGAKEGRRVNDRFVIEAANRLSVNVQVGGGIRTEEDVAYYLERGVARVILGSAAISNPTFVKKMLQTYGRRIVIGIDARDGFVATEGWLETSNVKAEELGQMLAEAGAETFIFTDIATDGTLSGPNITAAVRLAEATGKEVIASGGVRSLDDLRALREYAEQGIGGAIVGKALYTNQFTLAEALKAVNER</sequence>